<evidence type="ECO:0000255" key="1">
    <source>
        <dbReference type="HAMAP-Rule" id="MF_01541"/>
    </source>
</evidence>
<evidence type="ECO:0000256" key="2">
    <source>
        <dbReference type="SAM" id="MobiDB-lite"/>
    </source>
</evidence>
<comment type="function">
    <text evidence="1">Component of the sulfite reductase complex that catalyzes the 6-electron reduction of sulfite to sulfide. This is one of several activities required for the biosynthesis of L-cysteine from sulfate. The flavoprotein component catalyzes the electron flow from NADPH -&gt; FAD -&gt; FMN to the hemoprotein component.</text>
</comment>
<comment type="catalytic activity">
    <reaction evidence="1">
        <text>hydrogen sulfide + 3 NADP(+) + 3 H2O = sulfite + 3 NADPH + 4 H(+)</text>
        <dbReference type="Rhea" id="RHEA:13801"/>
        <dbReference type="ChEBI" id="CHEBI:15377"/>
        <dbReference type="ChEBI" id="CHEBI:15378"/>
        <dbReference type="ChEBI" id="CHEBI:17359"/>
        <dbReference type="ChEBI" id="CHEBI:29919"/>
        <dbReference type="ChEBI" id="CHEBI:57783"/>
        <dbReference type="ChEBI" id="CHEBI:58349"/>
        <dbReference type="EC" id="1.8.1.2"/>
    </reaction>
</comment>
<comment type="cofactor">
    <cofactor evidence="1">
        <name>FAD</name>
        <dbReference type="ChEBI" id="CHEBI:57692"/>
    </cofactor>
    <text evidence="1">Binds 1 FAD per subunit.</text>
</comment>
<comment type="cofactor">
    <cofactor evidence="1">
        <name>FMN</name>
        <dbReference type="ChEBI" id="CHEBI:58210"/>
    </cofactor>
    <text evidence="1">Binds 1 FMN per subunit.</text>
</comment>
<comment type="pathway">
    <text evidence="1">Sulfur metabolism; hydrogen sulfide biosynthesis; hydrogen sulfide from sulfite (NADPH route): step 1/1.</text>
</comment>
<comment type="subunit">
    <text evidence="1">Alpha(8)-beta(8). The alpha component is a flavoprotein, the beta component is a hemoprotein.</text>
</comment>
<comment type="similarity">
    <text evidence="1">Belongs to the NADPH-dependent sulphite reductase flavoprotein subunit CysJ family.</text>
</comment>
<comment type="similarity">
    <text evidence="1">In the N-terminal section; belongs to the flavodoxin family.</text>
</comment>
<comment type="similarity">
    <text evidence="1">In the C-terminal section; belongs to the flavoprotein pyridine nucleotide cytochrome reductase family.</text>
</comment>
<gene>
    <name evidence="1" type="primary">cysJ</name>
    <name type="ordered locus">NMC1092</name>
</gene>
<keyword id="KW-0028">Amino-acid biosynthesis</keyword>
<keyword id="KW-0198">Cysteine biosynthesis</keyword>
<keyword id="KW-0249">Electron transport</keyword>
<keyword id="KW-0274">FAD</keyword>
<keyword id="KW-0285">Flavoprotein</keyword>
<keyword id="KW-0288">FMN</keyword>
<keyword id="KW-0521">NADP</keyword>
<keyword id="KW-0560">Oxidoreductase</keyword>
<keyword id="KW-0813">Transport</keyword>
<dbReference type="EC" id="1.8.1.2" evidence="1"/>
<dbReference type="EMBL" id="AM421808">
    <property type="protein sequence ID" value="CAM10347.1"/>
    <property type="molecule type" value="Genomic_DNA"/>
</dbReference>
<dbReference type="RefSeq" id="WP_002224539.1">
    <property type="nucleotide sequence ID" value="NC_008767.1"/>
</dbReference>
<dbReference type="SMR" id="A1KU06"/>
<dbReference type="KEGG" id="nmc:NMC1092"/>
<dbReference type="HOGENOM" id="CLU_001570_17_7_4"/>
<dbReference type="UniPathway" id="UPA00140">
    <property type="reaction ID" value="UER00207"/>
</dbReference>
<dbReference type="Proteomes" id="UP000002286">
    <property type="component" value="Chromosome"/>
</dbReference>
<dbReference type="GO" id="GO:0005829">
    <property type="term" value="C:cytosol"/>
    <property type="evidence" value="ECO:0007669"/>
    <property type="project" value="TreeGrafter"/>
</dbReference>
<dbReference type="GO" id="GO:0050660">
    <property type="term" value="F:flavin adenine dinucleotide binding"/>
    <property type="evidence" value="ECO:0007669"/>
    <property type="project" value="InterPro"/>
</dbReference>
<dbReference type="GO" id="GO:0010181">
    <property type="term" value="F:FMN binding"/>
    <property type="evidence" value="ECO:0007669"/>
    <property type="project" value="InterPro"/>
</dbReference>
<dbReference type="GO" id="GO:0004783">
    <property type="term" value="F:sulfite reductase (NADPH) activity"/>
    <property type="evidence" value="ECO:0007669"/>
    <property type="project" value="UniProtKB-UniRule"/>
</dbReference>
<dbReference type="GO" id="GO:0019344">
    <property type="term" value="P:cysteine biosynthetic process"/>
    <property type="evidence" value="ECO:0007669"/>
    <property type="project" value="UniProtKB-KW"/>
</dbReference>
<dbReference type="GO" id="GO:0070814">
    <property type="term" value="P:hydrogen sulfide biosynthetic process"/>
    <property type="evidence" value="ECO:0007669"/>
    <property type="project" value="UniProtKB-UniRule"/>
</dbReference>
<dbReference type="GO" id="GO:0000103">
    <property type="term" value="P:sulfate assimilation"/>
    <property type="evidence" value="ECO:0007669"/>
    <property type="project" value="UniProtKB-UniRule"/>
</dbReference>
<dbReference type="CDD" id="cd06199">
    <property type="entry name" value="SiR"/>
    <property type="match status" value="1"/>
</dbReference>
<dbReference type="FunFam" id="3.40.50.80:FF:000001">
    <property type="entry name" value="NADPH--cytochrome P450 reductase 1"/>
    <property type="match status" value="1"/>
</dbReference>
<dbReference type="FunFam" id="3.40.50.360:FF:000018">
    <property type="entry name" value="Sulfite reductase [NADPH] flavoprotein alpha-component"/>
    <property type="match status" value="1"/>
</dbReference>
<dbReference type="Gene3D" id="3.40.50.360">
    <property type="match status" value="1"/>
</dbReference>
<dbReference type="Gene3D" id="1.20.990.10">
    <property type="entry name" value="NADPH-cytochrome p450 Reductase, Chain A, domain 3"/>
    <property type="match status" value="1"/>
</dbReference>
<dbReference type="Gene3D" id="3.40.50.80">
    <property type="entry name" value="Nucleotide-binding domain of ferredoxin-NADP reductase (FNR) module"/>
    <property type="match status" value="1"/>
</dbReference>
<dbReference type="Gene3D" id="2.40.30.10">
    <property type="entry name" value="Translation factors"/>
    <property type="match status" value="1"/>
</dbReference>
<dbReference type="HAMAP" id="MF_01541">
    <property type="entry name" value="CysJ"/>
    <property type="match status" value="1"/>
</dbReference>
<dbReference type="InterPro" id="IPR010199">
    <property type="entry name" value="CysJ"/>
</dbReference>
<dbReference type="InterPro" id="IPR003097">
    <property type="entry name" value="CysJ-like_FAD-binding"/>
</dbReference>
<dbReference type="InterPro" id="IPR029758">
    <property type="entry name" value="CysJ_Proteobact"/>
</dbReference>
<dbReference type="InterPro" id="IPR017927">
    <property type="entry name" value="FAD-bd_FR_type"/>
</dbReference>
<dbReference type="InterPro" id="IPR001094">
    <property type="entry name" value="Flavdoxin-like"/>
</dbReference>
<dbReference type="InterPro" id="IPR008254">
    <property type="entry name" value="Flavodoxin/NO_synth"/>
</dbReference>
<dbReference type="InterPro" id="IPR001709">
    <property type="entry name" value="Flavoprot_Pyr_Nucl_cyt_Rdtase"/>
</dbReference>
<dbReference type="InterPro" id="IPR029039">
    <property type="entry name" value="Flavoprotein-like_sf"/>
</dbReference>
<dbReference type="InterPro" id="IPR039261">
    <property type="entry name" value="FNR_nucleotide-bd"/>
</dbReference>
<dbReference type="InterPro" id="IPR023173">
    <property type="entry name" value="NADPH_Cyt_P450_Rdtase_alpha"/>
</dbReference>
<dbReference type="InterPro" id="IPR001433">
    <property type="entry name" value="OxRdtase_FAD/NAD-bd"/>
</dbReference>
<dbReference type="InterPro" id="IPR017938">
    <property type="entry name" value="Riboflavin_synthase-like_b-brl"/>
</dbReference>
<dbReference type="NCBIfam" id="TIGR01931">
    <property type="entry name" value="cysJ"/>
    <property type="match status" value="1"/>
</dbReference>
<dbReference type="PANTHER" id="PTHR19384:SF128">
    <property type="entry name" value="NADPH OXIDOREDUCTASE A"/>
    <property type="match status" value="1"/>
</dbReference>
<dbReference type="PANTHER" id="PTHR19384">
    <property type="entry name" value="NITRIC OXIDE SYNTHASE-RELATED"/>
    <property type="match status" value="1"/>
</dbReference>
<dbReference type="Pfam" id="PF00667">
    <property type="entry name" value="FAD_binding_1"/>
    <property type="match status" value="1"/>
</dbReference>
<dbReference type="Pfam" id="PF00258">
    <property type="entry name" value="Flavodoxin_1"/>
    <property type="match status" value="1"/>
</dbReference>
<dbReference type="Pfam" id="PF00175">
    <property type="entry name" value="NAD_binding_1"/>
    <property type="match status" value="1"/>
</dbReference>
<dbReference type="PIRSF" id="PIRSF000207">
    <property type="entry name" value="SiR-FP_CysJ"/>
    <property type="match status" value="1"/>
</dbReference>
<dbReference type="PRINTS" id="PR00369">
    <property type="entry name" value="FLAVODOXIN"/>
</dbReference>
<dbReference type="PRINTS" id="PR00371">
    <property type="entry name" value="FPNCR"/>
</dbReference>
<dbReference type="SUPFAM" id="SSF52343">
    <property type="entry name" value="Ferredoxin reductase-like, C-terminal NADP-linked domain"/>
    <property type="match status" value="1"/>
</dbReference>
<dbReference type="SUPFAM" id="SSF52218">
    <property type="entry name" value="Flavoproteins"/>
    <property type="match status" value="1"/>
</dbReference>
<dbReference type="SUPFAM" id="SSF63380">
    <property type="entry name" value="Riboflavin synthase domain-like"/>
    <property type="match status" value="1"/>
</dbReference>
<dbReference type="PROSITE" id="PS51384">
    <property type="entry name" value="FAD_FR"/>
    <property type="match status" value="1"/>
</dbReference>
<dbReference type="PROSITE" id="PS50902">
    <property type="entry name" value="FLAVODOXIN_LIKE"/>
    <property type="match status" value="1"/>
</dbReference>
<sequence length="604" mass="66179">MSEHDMQNTNPPLPPLPPEITQLLSGLDAAQWAWLSGYAWAKAGNGASAGLPALQTALPAAEPFSVTVLSASQTGNAKSVADKASDSLEAAGIQVRRAELKDYKAKNIADERRLLLVTSTQGEGEPPEEAVVLHKLLNGKKAPKLDKLQFAVLGLGDSSYPNFCRAGKDFDRRFEELGAKRLLERVDADLDFAAAADGWTGRIVARLKEEAAKNRATPAPQTTPPAGLQTAPDGRYCKADPFPAALLANQKITARQSDKDVRHIEIDLSGSDLHYLPGDALGVWFDNDPALVREILDLLGIDPATEIQAGGKTLPVASALLSHFELTQNTPAFVKGYAPFADDDELDRIAADNAVLQGFVQSTPIADVLHRFPAKLTAEQFAGLLRPLAPRLYSISSSQAEVGDEVHLTVGAVRFEHEGRARAGGASGFLADRLEEDGTVRVFVERNDGFRLPEDSRKPIVMIGSGTGVAPFRAFVQQRAAENAEGKNWLIFGNPHFARDFLYQTEWQQFAKDGFLHRYDFAWSRDQEEKIYVQDKIREQAEGLWQWLQEGAHIYVCGDAAKMAKDVEAALLDVIIGAGHLDEEGAEEYLDMLREEKRYQRDVY</sequence>
<protein>
    <recommendedName>
        <fullName evidence="1">Sulfite reductase [NADPH] flavoprotein alpha-component</fullName>
        <shortName evidence="1">SiR-FP</shortName>
        <ecNumber evidence="1">1.8.1.2</ecNumber>
    </recommendedName>
</protein>
<accession>A1KU06</accession>
<name>CYSJ_NEIMF</name>
<feature type="chain" id="PRO_0000292969" description="Sulfite reductase [NADPH] flavoprotein alpha-component">
    <location>
        <begin position="1"/>
        <end position="604"/>
    </location>
</feature>
<feature type="domain" description="Flavodoxin-like" evidence="1">
    <location>
        <begin position="66"/>
        <end position="204"/>
    </location>
</feature>
<feature type="domain" description="FAD-binding FR-type" evidence="1">
    <location>
        <begin position="239"/>
        <end position="453"/>
    </location>
</feature>
<feature type="region of interest" description="Disordered" evidence="2">
    <location>
        <begin position="212"/>
        <end position="231"/>
    </location>
</feature>
<feature type="compositionally biased region" description="Low complexity" evidence="2">
    <location>
        <begin position="216"/>
        <end position="231"/>
    </location>
</feature>
<feature type="binding site" evidence="1">
    <location>
        <begin position="72"/>
        <end position="77"/>
    </location>
    <ligand>
        <name>FMN</name>
        <dbReference type="ChEBI" id="CHEBI:58210"/>
    </ligand>
</feature>
<feature type="binding site" evidence="1">
    <location>
        <begin position="119"/>
        <end position="122"/>
    </location>
    <ligand>
        <name>FMN</name>
        <dbReference type="ChEBI" id="CHEBI:58210"/>
    </ligand>
</feature>
<feature type="binding site" evidence="1">
    <location>
        <begin position="155"/>
        <end position="164"/>
    </location>
    <ligand>
        <name>FMN</name>
        <dbReference type="ChEBI" id="CHEBI:58210"/>
    </ligand>
</feature>
<feature type="binding site" evidence="1">
    <location>
        <position position="327"/>
    </location>
    <ligand>
        <name>FAD</name>
        <dbReference type="ChEBI" id="CHEBI:57692"/>
    </ligand>
</feature>
<feature type="binding site" evidence="1">
    <location>
        <position position="361"/>
    </location>
    <ligand>
        <name>FAD</name>
        <dbReference type="ChEBI" id="CHEBI:57692"/>
    </ligand>
</feature>
<feature type="binding site" evidence="1">
    <location>
        <begin position="391"/>
        <end position="394"/>
    </location>
    <ligand>
        <name>FAD</name>
        <dbReference type="ChEBI" id="CHEBI:57692"/>
    </ligand>
</feature>
<feature type="binding site" evidence="1">
    <location>
        <begin position="409"/>
        <end position="411"/>
    </location>
    <ligand>
        <name>FAD</name>
        <dbReference type="ChEBI" id="CHEBI:57692"/>
    </ligand>
</feature>
<feature type="binding site" evidence="1">
    <location>
        <begin position="424"/>
        <end position="427"/>
    </location>
    <ligand>
        <name>FAD</name>
        <dbReference type="ChEBI" id="CHEBI:57692"/>
    </ligand>
</feature>
<feature type="binding site" evidence="1">
    <location>
        <begin position="524"/>
        <end position="525"/>
    </location>
    <ligand>
        <name>NADP(+)</name>
        <dbReference type="ChEBI" id="CHEBI:58349"/>
    </ligand>
</feature>
<feature type="binding site" evidence="1">
    <location>
        <begin position="530"/>
        <end position="534"/>
    </location>
    <ligand>
        <name>NADP(+)</name>
        <dbReference type="ChEBI" id="CHEBI:58349"/>
    </ligand>
</feature>
<feature type="binding site" evidence="1">
    <location>
        <position position="566"/>
    </location>
    <ligand>
        <name>NADP(+)</name>
        <dbReference type="ChEBI" id="CHEBI:58349"/>
    </ligand>
</feature>
<feature type="binding site" evidence="1">
    <location>
        <position position="604"/>
    </location>
    <ligand>
        <name>FAD</name>
        <dbReference type="ChEBI" id="CHEBI:57692"/>
    </ligand>
</feature>
<organism>
    <name type="scientific">Neisseria meningitidis serogroup C / serotype 2a (strain ATCC 700532 / DSM 15464 / FAM18)</name>
    <dbReference type="NCBI Taxonomy" id="272831"/>
    <lineage>
        <taxon>Bacteria</taxon>
        <taxon>Pseudomonadati</taxon>
        <taxon>Pseudomonadota</taxon>
        <taxon>Betaproteobacteria</taxon>
        <taxon>Neisseriales</taxon>
        <taxon>Neisseriaceae</taxon>
        <taxon>Neisseria</taxon>
    </lineage>
</organism>
<proteinExistence type="inferred from homology"/>
<reference key="1">
    <citation type="journal article" date="2007" name="PLoS Genet.">
        <title>Meningococcal genetic variation mechanisms viewed through comparative analysis of serogroup C strain FAM18.</title>
        <authorList>
            <person name="Bentley S.D."/>
            <person name="Vernikos G.S."/>
            <person name="Snyder L.A.S."/>
            <person name="Churcher C."/>
            <person name="Arrowsmith C."/>
            <person name="Chillingworth T."/>
            <person name="Cronin A."/>
            <person name="Davis P.H."/>
            <person name="Holroyd N.E."/>
            <person name="Jagels K."/>
            <person name="Maddison M."/>
            <person name="Moule S."/>
            <person name="Rabbinowitsch E."/>
            <person name="Sharp S."/>
            <person name="Unwin L."/>
            <person name="Whitehead S."/>
            <person name="Quail M.A."/>
            <person name="Achtman M."/>
            <person name="Barrell B.G."/>
            <person name="Saunders N.J."/>
            <person name="Parkhill J."/>
        </authorList>
    </citation>
    <scope>NUCLEOTIDE SEQUENCE [LARGE SCALE GENOMIC DNA]</scope>
    <source>
        <strain>ATCC 700532 / DSM 15464 / FAM18</strain>
    </source>
</reference>